<comment type="function">
    <text evidence="1">Catalyzes the formation of 4-diphosphocytidyl-2-C-methyl-D-erythritol from CTP and 2-C-methyl-D-erythritol 4-phosphate (MEP).</text>
</comment>
<comment type="catalytic activity">
    <reaction evidence="1">
        <text>2-C-methyl-D-erythritol 4-phosphate + CTP + H(+) = 4-CDP-2-C-methyl-D-erythritol + diphosphate</text>
        <dbReference type="Rhea" id="RHEA:13429"/>
        <dbReference type="ChEBI" id="CHEBI:15378"/>
        <dbReference type="ChEBI" id="CHEBI:33019"/>
        <dbReference type="ChEBI" id="CHEBI:37563"/>
        <dbReference type="ChEBI" id="CHEBI:57823"/>
        <dbReference type="ChEBI" id="CHEBI:58262"/>
        <dbReference type="EC" id="2.7.7.60"/>
    </reaction>
</comment>
<comment type="pathway">
    <text evidence="1">Isoprenoid biosynthesis; isopentenyl diphosphate biosynthesis via DXP pathway; isopentenyl diphosphate from 1-deoxy-D-xylulose 5-phosphate: step 2/6.</text>
</comment>
<comment type="similarity">
    <text evidence="1">Belongs to the IspD/TarI cytidylyltransferase family. IspD subfamily.</text>
</comment>
<gene>
    <name evidence="1" type="primary">ispD</name>
    <name type="ordered locus">Rmag_0755</name>
</gene>
<dbReference type="EC" id="2.7.7.60" evidence="1"/>
<dbReference type="EMBL" id="CP000488">
    <property type="protein sequence ID" value="ABL02482.1"/>
    <property type="molecule type" value="Genomic_DNA"/>
</dbReference>
<dbReference type="RefSeq" id="WP_011738107.1">
    <property type="nucleotide sequence ID" value="NC_008610.1"/>
</dbReference>
<dbReference type="SMR" id="A1AX25"/>
<dbReference type="STRING" id="413404.Rmag_0755"/>
<dbReference type="KEGG" id="rma:Rmag_0755"/>
<dbReference type="eggNOG" id="COG1211">
    <property type="taxonomic scope" value="Bacteria"/>
</dbReference>
<dbReference type="HOGENOM" id="CLU_061281_3_1_6"/>
<dbReference type="OrthoDB" id="9806837at2"/>
<dbReference type="UniPathway" id="UPA00056">
    <property type="reaction ID" value="UER00093"/>
</dbReference>
<dbReference type="Proteomes" id="UP000002587">
    <property type="component" value="Chromosome"/>
</dbReference>
<dbReference type="GO" id="GO:0050518">
    <property type="term" value="F:2-C-methyl-D-erythritol 4-phosphate cytidylyltransferase activity"/>
    <property type="evidence" value="ECO:0007669"/>
    <property type="project" value="UniProtKB-UniRule"/>
</dbReference>
<dbReference type="GO" id="GO:0019288">
    <property type="term" value="P:isopentenyl diphosphate biosynthetic process, methylerythritol 4-phosphate pathway"/>
    <property type="evidence" value="ECO:0007669"/>
    <property type="project" value="UniProtKB-UniRule"/>
</dbReference>
<dbReference type="CDD" id="cd02516">
    <property type="entry name" value="CDP-ME_synthetase"/>
    <property type="match status" value="1"/>
</dbReference>
<dbReference type="FunFam" id="3.90.550.10:FF:000003">
    <property type="entry name" value="2-C-methyl-D-erythritol 4-phosphate cytidylyltransferase"/>
    <property type="match status" value="1"/>
</dbReference>
<dbReference type="Gene3D" id="3.90.550.10">
    <property type="entry name" value="Spore Coat Polysaccharide Biosynthesis Protein SpsA, Chain A"/>
    <property type="match status" value="1"/>
</dbReference>
<dbReference type="HAMAP" id="MF_00108">
    <property type="entry name" value="IspD"/>
    <property type="match status" value="1"/>
</dbReference>
<dbReference type="InterPro" id="IPR001228">
    <property type="entry name" value="IspD"/>
</dbReference>
<dbReference type="InterPro" id="IPR034683">
    <property type="entry name" value="IspD/TarI"/>
</dbReference>
<dbReference type="InterPro" id="IPR050088">
    <property type="entry name" value="IspD/TarI_cytidylyltransf_bact"/>
</dbReference>
<dbReference type="InterPro" id="IPR018294">
    <property type="entry name" value="ISPD_synthase_CS"/>
</dbReference>
<dbReference type="InterPro" id="IPR029044">
    <property type="entry name" value="Nucleotide-diphossugar_trans"/>
</dbReference>
<dbReference type="NCBIfam" id="TIGR00453">
    <property type="entry name" value="ispD"/>
    <property type="match status" value="1"/>
</dbReference>
<dbReference type="PANTHER" id="PTHR32125">
    <property type="entry name" value="2-C-METHYL-D-ERYTHRITOL 4-PHOSPHATE CYTIDYLYLTRANSFERASE, CHLOROPLASTIC"/>
    <property type="match status" value="1"/>
</dbReference>
<dbReference type="PANTHER" id="PTHR32125:SF4">
    <property type="entry name" value="2-C-METHYL-D-ERYTHRITOL 4-PHOSPHATE CYTIDYLYLTRANSFERASE, CHLOROPLASTIC"/>
    <property type="match status" value="1"/>
</dbReference>
<dbReference type="Pfam" id="PF01128">
    <property type="entry name" value="IspD"/>
    <property type="match status" value="1"/>
</dbReference>
<dbReference type="SUPFAM" id="SSF53448">
    <property type="entry name" value="Nucleotide-diphospho-sugar transferases"/>
    <property type="match status" value="1"/>
</dbReference>
<dbReference type="PROSITE" id="PS01295">
    <property type="entry name" value="ISPD"/>
    <property type="match status" value="1"/>
</dbReference>
<keyword id="KW-0414">Isoprene biosynthesis</keyword>
<keyword id="KW-0548">Nucleotidyltransferase</keyword>
<keyword id="KW-0808">Transferase</keyword>
<protein>
    <recommendedName>
        <fullName evidence="1">2-C-methyl-D-erythritol 4-phosphate cytidylyltransferase</fullName>
        <ecNumber evidence="1">2.7.7.60</ecNumber>
    </recommendedName>
    <alternativeName>
        <fullName evidence="1">4-diphosphocytidyl-2C-methyl-D-erythritol synthase</fullName>
    </alternativeName>
    <alternativeName>
        <fullName evidence="1">MEP cytidylyltransferase</fullName>
        <shortName evidence="1">MCT</shortName>
    </alternativeName>
</protein>
<proteinExistence type="inferred from homology"/>
<evidence type="ECO:0000255" key="1">
    <source>
        <dbReference type="HAMAP-Rule" id="MF_00108"/>
    </source>
</evidence>
<organism>
    <name type="scientific">Ruthia magnifica subsp. Calyptogena magnifica</name>
    <dbReference type="NCBI Taxonomy" id="413404"/>
    <lineage>
        <taxon>Bacteria</taxon>
        <taxon>Pseudomonadati</taxon>
        <taxon>Pseudomonadota</taxon>
        <taxon>Gammaproteobacteria</taxon>
        <taxon>Candidatus Pseudothioglobaceae</taxon>
        <taxon>Candidatus Ruthturnera</taxon>
    </lineage>
</organism>
<reference key="1">
    <citation type="journal article" date="2007" name="Science">
        <title>The Calyptogena magnifica chemoautotrophic symbiont genome.</title>
        <authorList>
            <person name="Newton I.L.G."/>
            <person name="Woyke T."/>
            <person name="Auchtung T.A."/>
            <person name="Dilly G.F."/>
            <person name="Dutton R.J."/>
            <person name="Fisher M.C."/>
            <person name="Fontanez K.M."/>
            <person name="Lau E."/>
            <person name="Stewart F.J."/>
            <person name="Richardson P.M."/>
            <person name="Barry K.W."/>
            <person name="Saunders E."/>
            <person name="Detter J.C."/>
            <person name="Wu D."/>
            <person name="Eisen J.A."/>
            <person name="Cavanaugh C.M."/>
        </authorList>
    </citation>
    <scope>NUCLEOTIDE SEQUENCE [LARGE SCALE GENOMIC DNA]</scope>
</reference>
<name>ISPD_RUTMC</name>
<feature type="chain" id="PRO_1000022946" description="2-C-methyl-D-erythritol 4-phosphate cytidylyltransferase">
    <location>
        <begin position="1"/>
        <end position="239"/>
    </location>
</feature>
<feature type="site" description="Transition state stabilizer" evidence="1">
    <location>
        <position position="17"/>
    </location>
</feature>
<feature type="site" description="Transition state stabilizer" evidence="1">
    <location>
        <position position="30"/>
    </location>
</feature>
<feature type="site" description="Positions MEP for the nucleophilic attack" evidence="1">
    <location>
        <position position="164"/>
    </location>
</feature>
<feature type="site" description="Positions MEP for the nucleophilic attack" evidence="1">
    <location>
        <position position="220"/>
    </location>
</feature>
<accession>A1AX25</accession>
<sequence>MPSHYYLIIPASGVGVRMHPEKDGLNEQPKQYLKLDNGLTILDQTLKTLLSINQIKSCVIAIKNKDHLFAKSAFNNHPKLLTIVTGGKERMYSVLNALKALIDFAKDDDWVLVHDSVRPCVKASEIINLMKQLKHHATGGLLATKVVDTIKQADNNIINTTIDRSNLWQAQTPQMYRFSVLLKALNTAIKDGINITDETSAIEHLGLESILVKSSKSNIKVTNPEDLILANFYLNQHQK</sequence>